<reference key="1">
    <citation type="journal article" date="2008" name="PLoS Genet.">
        <title>Complete genome sequence of the N2-fixing broad host range endophyte Klebsiella pneumoniae 342 and virulence predictions verified in mice.</title>
        <authorList>
            <person name="Fouts D.E."/>
            <person name="Tyler H.L."/>
            <person name="DeBoy R.T."/>
            <person name="Daugherty S."/>
            <person name="Ren Q."/>
            <person name="Badger J.H."/>
            <person name="Durkin A.S."/>
            <person name="Huot H."/>
            <person name="Shrivastava S."/>
            <person name="Kothari S."/>
            <person name="Dodson R.J."/>
            <person name="Mohamoud Y."/>
            <person name="Khouri H."/>
            <person name="Roesch L.F.W."/>
            <person name="Krogfelt K.A."/>
            <person name="Struve C."/>
            <person name="Triplett E.W."/>
            <person name="Methe B.A."/>
        </authorList>
    </citation>
    <scope>NUCLEOTIDE SEQUENCE [LARGE SCALE GENOMIC DNA]</scope>
    <source>
        <strain>342</strain>
    </source>
</reference>
<dbReference type="EMBL" id="CP000964">
    <property type="protein sequence ID" value="ACI10229.1"/>
    <property type="molecule type" value="Genomic_DNA"/>
</dbReference>
<dbReference type="SMR" id="B5XU96"/>
<dbReference type="KEGG" id="kpe:KPK_0722"/>
<dbReference type="HOGENOM" id="CLU_130694_5_0_6"/>
<dbReference type="BioCyc" id="KPNE507522:GI0B-722-MONOMER"/>
<dbReference type="Proteomes" id="UP000001734">
    <property type="component" value="Chromosome"/>
</dbReference>
<dbReference type="GO" id="GO:0005737">
    <property type="term" value="C:cytoplasm"/>
    <property type="evidence" value="ECO:0007669"/>
    <property type="project" value="TreeGrafter"/>
</dbReference>
<dbReference type="Gene3D" id="3.30.1200.10">
    <property type="entry name" value="YggU-like"/>
    <property type="match status" value="1"/>
</dbReference>
<dbReference type="HAMAP" id="MF_00634">
    <property type="entry name" value="UPF0235"/>
    <property type="match status" value="1"/>
</dbReference>
<dbReference type="InterPro" id="IPR003746">
    <property type="entry name" value="DUF167"/>
</dbReference>
<dbReference type="InterPro" id="IPR036591">
    <property type="entry name" value="YggU-like_sf"/>
</dbReference>
<dbReference type="NCBIfam" id="TIGR00251">
    <property type="entry name" value="DUF167 family protein"/>
    <property type="match status" value="1"/>
</dbReference>
<dbReference type="NCBIfam" id="NF003466">
    <property type="entry name" value="PRK05090.1"/>
    <property type="match status" value="1"/>
</dbReference>
<dbReference type="PANTHER" id="PTHR13420">
    <property type="entry name" value="UPF0235 PROTEIN C15ORF40"/>
    <property type="match status" value="1"/>
</dbReference>
<dbReference type="PANTHER" id="PTHR13420:SF7">
    <property type="entry name" value="UPF0235 PROTEIN C15ORF40"/>
    <property type="match status" value="1"/>
</dbReference>
<dbReference type="Pfam" id="PF02594">
    <property type="entry name" value="DUF167"/>
    <property type="match status" value="1"/>
</dbReference>
<dbReference type="SMART" id="SM01152">
    <property type="entry name" value="DUF167"/>
    <property type="match status" value="1"/>
</dbReference>
<dbReference type="SUPFAM" id="SSF69786">
    <property type="entry name" value="YggU-like"/>
    <property type="match status" value="1"/>
</dbReference>
<feature type="chain" id="PRO_1000130691" description="UPF0235 protein KPK_0722">
    <location>
        <begin position="1"/>
        <end position="96"/>
    </location>
</feature>
<organism>
    <name type="scientific">Klebsiella pneumoniae (strain 342)</name>
    <dbReference type="NCBI Taxonomy" id="507522"/>
    <lineage>
        <taxon>Bacteria</taxon>
        <taxon>Pseudomonadati</taxon>
        <taxon>Pseudomonadota</taxon>
        <taxon>Gammaproteobacteria</taxon>
        <taxon>Enterobacterales</taxon>
        <taxon>Enterobacteriaceae</taxon>
        <taxon>Klebsiella/Raoultella group</taxon>
        <taxon>Klebsiella</taxon>
        <taxon>Klebsiella pneumoniae complex</taxon>
    </lineage>
</organism>
<name>Y722_KLEP3</name>
<accession>B5XU96</accession>
<sequence length="96" mass="10294">MSAVETCADGLVLRLYIQPKASRDSIVGVHGDELKVAITAPPVDGQANAHLVKFLAKQFRVAKSQVLIEKGELGRHKQVKIIAPQQIPTAVAALTE</sequence>
<gene>
    <name type="ordered locus">KPK_0722</name>
</gene>
<comment type="similarity">
    <text evidence="1">Belongs to the UPF0235 family.</text>
</comment>
<evidence type="ECO:0000255" key="1">
    <source>
        <dbReference type="HAMAP-Rule" id="MF_00634"/>
    </source>
</evidence>
<proteinExistence type="inferred from homology"/>
<protein>
    <recommendedName>
        <fullName evidence="1">UPF0235 protein KPK_0722</fullName>
    </recommendedName>
</protein>